<reference key="1">
    <citation type="journal article" date="2005" name="BMC Genomics">
        <title>Characterization of 954 bovine full-CDS cDNA sequences.</title>
        <authorList>
            <person name="Harhay G.P."/>
            <person name="Sonstegard T.S."/>
            <person name="Keele J.W."/>
            <person name="Heaton M.P."/>
            <person name="Clawson M.L."/>
            <person name="Snelling W.M."/>
            <person name="Wiedmann R.T."/>
            <person name="Van Tassell C.P."/>
            <person name="Smith T.P.L."/>
        </authorList>
    </citation>
    <scope>NUCLEOTIDE SEQUENCE [LARGE SCALE MRNA]</scope>
</reference>
<reference key="2">
    <citation type="submission" date="2006-06" db="EMBL/GenBank/DDBJ databases">
        <authorList>
            <consortium name="NIH - Mammalian Gene Collection (MGC) project"/>
        </authorList>
    </citation>
    <scope>NUCLEOTIDE SEQUENCE [LARGE SCALE MRNA]</scope>
    <source>
        <strain>Hereford</strain>
        <tissue>Thalamus</tissue>
    </source>
</reference>
<comment type="function">
    <text evidence="2 3">DNA-dependent RNA polymerase catalyzes the transcription of DNA into RNA using the four ribonucleoside triphosphates as substrates (By similarity). Specific peripheric component of RNA polymerase III (Pol III) which synthesizes small non-coding RNAs including 5S rRNA, snRNAs, tRNAs and miRNAs from at least 500 distinct genomic loci. Enables recruitment of Pol III at transcription initiation site and drives transcription initiation from both type 2 and type 3 DNA promoters. Required for efficient transcription termination and reinitiation (By similarity). Pol III plays a key role in sensing and limiting infection by intracellular bacteria and DNA viruses. Acts as nuclear and cytosolic DNA sensor involved in innate immune response. Can sense non-self dsDNA that serves as template for transcription into dsRNA. The non-self RNA polymerase III transcripts, such as Epstein-Barr virus-encoded RNAs (EBERs) induce type I interferon and NF-kappa-B through the RIG-I pathway (By similarity).</text>
</comment>
<comment type="subunit">
    <text evidence="2">Component of the RNA polymerase III complex consisting of 17 subunits: a ten-subunit horseshoe-shaped catalytic core composed of POLR3A/RPC1, POLR3B/RPC2, POLR1C/RPAC1, POLR1D/RPAC2, POLR3K/RPC10, POLR2E/RPABC1, POLR2F/RPABC2, POLR2H/RPABC3, POLR2K/RPABC4 and POLR2L/RPABC5; a mobile stalk composed of two subunits POLR3H/RPC8 and CRCP/RPC9, protruding from the core and functioning primarily in transcription initiation; and additional subunits homologous to general transcription factors of the RNA polymerase II machinery, POLR3C/RPC3-POLR3F/RPC6-POLR3G/RPC7 heterotrimer required for transcription initiation and POLR3D/RPC4-POLR3E/RPC5 heterodimer involved in both transcription initiation and termination.</text>
</comment>
<comment type="subcellular location">
    <subcellularLocation>
        <location evidence="1">Nucleus</location>
    </subcellularLocation>
</comment>
<comment type="PTM">
    <text evidence="2">Sumoylation on Lys-141 can serve as a signal to mark misfolded Pol III for proteasomal degradation.</text>
</comment>
<comment type="similarity">
    <text evidence="5">Belongs to the eukaryotic RPC4/POLR3D RNA polymerase subunit family.</text>
</comment>
<dbReference type="EMBL" id="BT020772">
    <property type="protein sequence ID" value="AAX08789.1"/>
    <property type="molecule type" value="mRNA"/>
</dbReference>
<dbReference type="EMBL" id="BC118212">
    <property type="protein sequence ID" value="AAI18213.1"/>
    <property type="molecule type" value="mRNA"/>
</dbReference>
<dbReference type="RefSeq" id="XP_005210298.1">
    <property type="nucleotide sequence ID" value="XM_005210241.3"/>
</dbReference>
<dbReference type="RefSeq" id="XP_005210299.1">
    <property type="nucleotide sequence ID" value="XM_005210242.3"/>
</dbReference>
<dbReference type="FunCoup" id="Q5E9Z7">
    <property type="interactions" value="2378"/>
</dbReference>
<dbReference type="STRING" id="9913.ENSBTAP00000059220"/>
<dbReference type="PaxDb" id="9913-ENSBTAP00000013251"/>
<dbReference type="GeneID" id="508049"/>
<dbReference type="CTD" id="661"/>
<dbReference type="eggNOG" id="KOG3122">
    <property type="taxonomic scope" value="Eukaryota"/>
</dbReference>
<dbReference type="InParanoid" id="Q5E9Z7"/>
<dbReference type="OrthoDB" id="5836119at2759"/>
<dbReference type="Proteomes" id="UP000009136">
    <property type="component" value="Unplaced"/>
</dbReference>
<dbReference type="GO" id="GO:0005666">
    <property type="term" value="C:RNA polymerase III complex"/>
    <property type="evidence" value="ECO:0000318"/>
    <property type="project" value="GO_Central"/>
</dbReference>
<dbReference type="GO" id="GO:0003677">
    <property type="term" value="F:DNA binding"/>
    <property type="evidence" value="ECO:0007669"/>
    <property type="project" value="InterPro"/>
</dbReference>
<dbReference type="GO" id="GO:0051607">
    <property type="term" value="P:defense response to virus"/>
    <property type="evidence" value="ECO:0007669"/>
    <property type="project" value="UniProtKB-KW"/>
</dbReference>
<dbReference type="GO" id="GO:0045087">
    <property type="term" value="P:innate immune response"/>
    <property type="evidence" value="ECO:0007669"/>
    <property type="project" value="UniProtKB-KW"/>
</dbReference>
<dbReference type="GO" id="GO:0045089">
    <property type="term" value="P:positive regulation of innate immune response"/>
    <property type="evidence" value="ECO:0000250"/>
    <property type="project" value="UniProtKB"/>
</dbReference>
<dbReference type="GO" id="GO:0032728">
    <property type="term" value="P:positive regulation of interferon-beta production"/>
    <property type="evidence" value="ECO:0000250"/>
    <property type="project" value="UniProtKB"/>
</dbReference>
<dbReference type="GO" id="GO:0042797">
    <property type="term" value="P:tRNA transcription by RNA polymerase III"/>
    <property type="evidence" value="ECO:0000318"/>
    <property type="project" value="GO_Central"/>
</dbReference>
<dbReference type="InterPro" id="IPR007811">
    <property type="entry name" value="RPC4"/>
</dbReference>
<dbReference type="PANTHER" id="PTHR13408">
    <property type="entry name" value="DNA-DIRECTED RNA POLYMERASE III"/>
    <property type="match status" value="1"/>
</dbReference>
<dbReference type="PANTHER" id="PTHR13408:SF0">
    <property type="entry name" value="DNA-DIRECTED RNA POLYMERASE III SUBUNIT RPC4"/>
    <property type="match status" value="1"/>
</dbReference>
<dbReference type="Pfam" id="PF05132">
    <property type="entry name" value="RNA_pol_Rpc4"/>
    <property type="match status" value="1"/>
</dbReference>
<feature type="initiator methionine" description="Removed" evidence="2">
    <location>
        <position position="1"/>
    </location>
</feature>
<feature type="chain" id="PRO_0000239118" description="DNA-directed RNA polymerase III subunit RPC4">
    <location>
        <begin position="2"/>
        <end position="398"/>
    </location>
</feature>
<feature type="region of interest" description="Disordered" evidence="4">
    <location>
        <begin position="1"/>
        <end position="105"/>
    </location>
</feature>
<feature type="compositionally biased region" description="Basic and acidic residues" evidence="4">
    <location>
        <begin position="66"/>
        <end position="100"/>
    </location>
</feature>
<feature type="modified residue" description="N-acetylserine" evidence="2">
    <location>
        <position position="2"/>
    </location>
</feature>
<feature type="modified residue" description="Phosphoserine" evidence="2">
    <location>
        <position position="42"/>
    </location>
</feature>
<feature type="modified residue" description="Omega-N-methylarginine" evidence="2">
    <location>
        <position position="95"/>
    </location>
</feature>
<feature type="modified residue" description="Omega-N-methylarginine" evidence="2">
    <location>
        <position position="97"/>
    </location>
</feature>
<feature type="modified residue" description="Omega-N-methylarginine" evidence="2">
    <location>
        <position position="99"/>
    </location>
</feature>
<feature type="cross-link" description="Glycyl lysine isopeptide (Lys-Gly) (interchain with G-Cter in SUMO2)" evidence="2">
    <location>
        <position position="68"/>
    </location>
</feature>
<feature type="cross-link" description="Glycyl lysine isopeptide (Lys-Gly) (interchain with G-Cter in SUMO2)" evidence="2">
    <location>
        <position position="78"/>
    </location>
</feature>
<feature type="cross-link" description="Glycyl lysine isopeptide (Lys-Gly) (interchain with G-Cter in SUMO2)" evidence="2">
    <location>
        <position position="141"/>
    </location>
</feature>
<feature type="cross-link" description="Glycyl lysine isopeptide (Lys-Gly) (interchain with G-Cter in SUMO2)" evidence="2">
    <location>
        <position position="152"/>
    </location>
</feature>
<feature type="cross-link" description="Glycyl lysine isopeptide (Lys-Gly) (interchain with G-Cter in SUMO2)" evidence="2">
    <location>
        <position position="160"/>
    </location>
</feature>
<feature type="cross-link" description="Glycyl lysine isopeptide (Lys-Gly) (interchain with G-Cter in SUMO2)" evidence="2">
    <location>
        <position position="190"/>
    </location>
</feature>
<feature type="cross-link" description="Glycyl lysine isopeptide (Lys-Gly) (interchain with G-Cter in SUMO2)" evidence="2">
    <location>
        <position position="199"/>
    </location>
</feature>
<feature type="cross-link" description="Glycyl lysine isopeptide (Lys-Gly) (interchain with G-Cter in SUMO2)" evidence="2">
    <location>
        <position position="206"/>
    </location>
</feature>
<feature type="cross-link" description="Glycyl lysine isopeptide (Lys-Gly) (interchain with G-Cter in SUMO2)" evidence="2">
    <location>
        <position position="220"/>
    </location>
</feature>
<feature type="cross-link" description="Glycyl lysine isopeptide (Lys-Gly) (interchain with G-Cter in SUMO2)" evidence="2">
    <location>
        <position position="285"/>
    </location>
</feature>
<feature type="cross-link" description="Glycyl lysine isopeptide (Lys-Gly) (interchain with G-Cter in SUMO2)" evidence="2">
    <location>
        <position position="302"/>
    </location>
</feature>
<keyword id="KW-0007">Acetylation</keyword>
<keyword id="KW-0051">Antiviral defense</keyword>
<keyword id="KW-0240">DNA-directed RNA polymerase</keyword>
<keyword id="KW-0391">Immunity</keyword>
<keyword id="KW-0399">Innate immunity</keyword>
<keyword id="KW-1017">Isopeptide bond</keyword>
<keyword id="KW-0488">Methylation</keyword>
<keyword id="KW-0539">Nucleus</keyword>
<keyword id="KW-0597">Phosphoprotein</keyword>
<keyword id="KW-1185">Reference proteome</keyword>
<keyword id="KW-0804">Transcription</keyword>
<keyword id="KW-0832">Ubl conjugation</keyword>
<name>RPC4_BOVIN</name>
<gene>
    <name type="primary">POLR3D</name>
</gene>
<organism>
    <name type="scientific">Bos taurus</name>
    <name type="common">Bovine</name>
    <dbReference type="NCBI Taxonomy" id="9913"/>
    <lineage>
        <taxon>Eukaryota</taxon>
        <taxon>Metazoa</taxon>
        <taxon>Chordata</taxon>
        <taxon>Craniata</taxon>
        <taxon>Vertebrata</taxon>
        <taxon>Euteleostomi</taxon>
        <taxon>Mammalia</taxon>
        <taxon>Eutheria</taxon>
        <taxon>Laurasiatheria</taxon>
        <taxon>Artiodactyla</taxon>
        <taxon>Ruminantia</taxon>
        <taxon>Pecora</taxon>
        <taxon>Bovidae</taxon>
        <taxon>Bovinae</taxon>
        <taxon>Bos</taxon>
    </lineage>
</organism>
<sequence>MSEGNAAGEPSAPGGPRPLLSGARGLIGRRPAPPLTPGRLPSIRSRDLTLGGVKKKTFTPNIISRKIKEEPKEEVTVKKEKRERDRDRQRDSHGRGRGRPEVIQSHSIFEQGPAEMMKKKGNWDKTVDMSDVGPSHIINIKKEKRETDEETKQILRMLEKDDFIDDPGLRNDIRNMPVQLPLAHSGWLFKEENEETDVKPRLAGPKEEDMEVDMPAVKVKEEPRDEDEEAKMKAPLRAARKIPGLPKDVSVAELLRELSLTQEEELLFLQLPDSLPGQPPTQDIKPIKTEVQSEDGQMVVIKQEKDREARLAENTCTLADLTEGQVGKLLIRKSGKVQLLLGKVTLDVTMGTTCSFLQELVSVGLGDSRTGDMTVLGHIKHKLVCSPNFESLLDHRHR</sequence>
<protein>
    <recommendedName>
        <fullName>DNA-directed RNA polymerase III subunit RPC4</fullName>
        <shortName>RNA polymerase III subunit C4</shortName>
    </recommendedName>
    <alternativeName>
        <fullName>DNA-directed RNA polymerase III subunit D</fullName>
    </alternativeName>
</protein>
<evidence type="ECO:0000250" key="1"/>
<evidence type="ECO:0000250" key="2">
    <source>
        <dbReference type="UniProtKB" id="P05423"/>
    </source>
</evidence>
<evidence type="ECO:0000250" key="3">
    <source>
        <dbReference type="UniProtKB" id="P25441"/>
    </source>
</evidence>
<evidence type="ECO:0000256" key="4">
    <source>
        <dbReference type="SAM" id="MobiDB-lite"/>
    </source>
</evidence>
<evidence type="ECO:0000305" key="5"/>
<accession>Q5E9Z7</accession>
<accession>Q17QS2</accession>
<proteinExistence type="evidence at transcript level"/>